<name>PTH_KLEP3</name>
<proteinExistence type="inferred from homology"/>
<keyword id="KW-0963">Cytoplasm</keyword>
<keyword id="KW-0378">Hydrolase</keyword>
<keyword id="KW-0694">RNA-binding</keyword>
<keyword id="KW-0820">tRNA-binding</keyword>
<gene>
    <name evidence="1" type="primary">pth</name>
    <name type="ordered locus">KPK_2061</name>
</gene>
<protein>
    <recommendedName>
        <fullName evidence="1">Peptidyl-tRNA hydrolase</fullName>
        <shortName evidence="1">Pth</shortName>
        <ecNumber evidence="1">3.1.1.29</ecNumber>
    </recommendedName>
</protein>
<accession>B5XW43</accession>
<sequence>MTIKLIVGLANPGAEYAATRHNAGAWYVDLLADRHRAPLREESKFFGYTSRINLAGEDVRLLVPTTFMNLSGKAVAAMATFYRINPDEILVAHDELDLPPGVAKFKLGGGHGGHNGLKDIISKLGNNPNFHRLRVGIGHPGDKNKVVGFVLGKPPASEQKLIDDAVDEAARCTEIWLKDGLTKATNRLHAFKAQ</sequence>
<comment type="function">
    <text evidence="1">Hydrolyzes ribosome-free peptidyl-tRNAs (with 1 or more amino acids incorporated), which drop off the ribosome during protein synthesis, or as a result of ribosome stalling.</text>
</comment>
<comment type="function">
    <text evidence="1">Catalyzes the release of premature peptidyl moieties from peptidyl-tRNA molecules trapped in stalled 50S ribosomal subunits, and thus maintains levels of free tRNAs and 50S ribosomes.</text>
</comment>
<comment type="catalytic activity">
    <reaction evidence="1">
        <text>an N-acyl-L-alpha-aminoacyl-tRNA + H2O = an N-acyl-L-amino acid + a tRNA + H(+)</text>
        <dbReference type="Rhea" id="RHEA:54448"/>
        <dbReference type="Rhea" id="RHEA-COMP:10123"/>
        <dbReference type="Rhea" id="RHEA-COMP:13883"/>
        <dbReference type="ChEBI" id="CHEBI:15377"/>
        <dbReference type="ChEBI" id="CHEBI:15378"/>
        <dbReference type="ChEBI" id="CHEBI:59874"/>
        <dbReference type="ChEBI" id="CHEBI:78442"/>
        <dbReference type="ChEBI" id="CHEBI:138191"/>
        <dbReference type="EC" id="3.1.1.29"/>
    </reaction>
</comment>
<comment type="subunit">
    <text evidence="1">Monomer.</text>
</comment>
<comment type="subcellular location">
    <subcellularLocation>
        <location evidence="1">Cytoplasm</location>
    </subcellularLocation>
</comment>
<comment type="similarity">
    <text evidence="1">Belongs to the PTH family.</text>
</comment>
<organism>
    <name type="scientific">Klebsiella pneumoniae (strain 342)</name>
    <dbReference type="NCBI Taxonomy" id="507522"/>
    <lineage>
        <taxon>Bacteria</taxon>
        <taxon>Pseudomonadati</taxon>
        <taxon>Pseudomonadota</taxon>
        <taxon>Gammaproteobacteria</taxon>
        <taxon>Enterobacterales</taxon>
        <taxon>Enterobacteriaceae</taxon>
        <taxon>Klebsiella/Raoultella group</taxon>
        <taxon>Klebsiella</taxon>
        <taxon>Klebsiella pneumoniae complex</taxon>
    </lineage>
</organism>
<evidence type="ECO:0000255" key="1">
    <source>
        <dbReference type="HAMAP-Rule" id="MF_00083"/>
    </source>
</evidence>
<feature type="chain" id="PRO_1000092950" description="Peptidyl-tRNA hydrolase">
    <location>
        <begin position="1"/>
        <end position="194"/>
    </location>
</feature>
<feature type="active site" description="Proton acceptor" evidence="1">
    <location>
        <position position="21"/>
    </location>
</feature>
<feature type="binding site" evidence="1">
    <location>
        <position position="16"/>
    </location>
    <ligand>
        <name>tRNA</name>
        <dbReference type="ChEBI" id="CHEBI:17843"/>
    </ligand>
</feature>
<feature type="binding site" evidence="1">
    <location>
        <position position="67"/>
    </location>
    <ligand>
        <name>tRNA</name>
        <dbReference type="ChEBI" id="CHEBI:17843"/>
    </ligand>
</feature>
<feature type="binding site" evidence="1">
    <location>
        <position position="69"/>
    </location>
    <ligand>
        <name>tRNA</name>
        <dbReference type="ChEBI" id="CHEBI:17843"/>
    </ligand>
</feature>
<feature type="binding site" evidence="1">
    <location>
        <position position="115"/>
    </location>
    <ligand>
        <name>tRNA</name>
        <dbReference type="ChEBI" id="CHEBI:17843"/>
    </ligand>
</feature>
<feature type="site" description="Discriminates between blocked and unblocked aminoacyl-tRNA" evidence="1">
    <location>
        <position position="11"/>
    </location>
</feature>
<feature type="site" description="Stabilizes the basic form of H active site to accept a proton" evidence="1">
    <location>
        <position position="94"/>
    </location>
</feature>
<dbReference type="EC" id="3.1.1.29" evidence="1"/>
<dbReference type="EMBL" id="CP000964">
    <property type="protein sequence ID" value="ACI07098.1"/>
    <property type="molecule type" value="Genomic_DNA"/>
</dbReference>
<dbReference type="SMR" id="B5XW43"/>
<dbReference type="KEGG" id="kpe:KPK_2061"/>
<dbReference type="HOGENOM" id="CLU_062456_3_1_6"/>
<dbReference type="Proteomes" id="UP000001734">
    <property type="component" value="Chromosome"/>
</dbReference>
<dbReference type="GO" id="GO:0005737">
    <property type="term" value="C:cytoplasm"/>
    <property type="evidence" value="ECO:0007669"/>
    <property type="project" value="UniProtKB-SubCell"/>
</dbReference>
<dbReference type="GO" id="GO:0004045">
    <property type="term" value="F:peptidyl-tRNA hydrolase activity"/>
    <property type="evidence" value="ECO:0007669"/>
    <property type="project" value="UniProtKB-UniRule"/>
</dbReference>
<dbReference type="GO" id="GO:0000049">
    <property type="term" value="F:tRNA binding"/>
    <property type="evidence" value="ECO:0007669"/>
    <property type="project" value="UniProtKB-UniRule"/>
</dbReference>
<dbReference type="GO" id="GO:0006515">
    <property type="term" value="P:protein quality control for misfolded or incompletely synthesized proteins"/>
    <property type="evidence" value="ECO:0007669"/>
    <property type="project" value="UniProtKB-UniRule"/>
</dbReference>
<dbReference type="GO" id="GO:0072344">
    <property type="term" value="P:rescue of stalled ribosome"/>
    <property type="evidence" value="ECO:0007669"/>
    <property type="project" value="UniProtKB-UniRule"/>
</dbReference>
<dbReference type="CDD" id="cd00462">
    <property type="entry name" value="PTH"/>
    <property type="match status" value="1"/>
</dbReference>
<dbReference type="FunFam" id="3.40.50.1470:FF:000001">
    <property type="entry name" value="Peptidyl-tRNA hydrolase"/>
    <property type="match status" value="1"/>
</dbReference>
<dbReference type="Gene3D" id="3.40.50.1470">
    <property type="entry name" value="Peptidyl-tRNA hydrolase"/>
    <property type="match status" value="1"/>
</dbReference>
<dbReference type="HAMAP" id="MF_00083">
    <property type="entry name" value="Pept_tRNA_hydro_bact"/>
    <property type="match status" value="1"/>
</dbReference>
<dbReference type="InterPro" id="IPR001328">
    <property type="entry name" value="Pept_tRNA_hydro"/>
</dbReference>
<dbReference type="InterPro" id="IPR018171">
    <property type="entry name" value="Pept_tRNA_hydro_CS"/>
</dbReference>
<dbReference type="InterPro" id="IPR036416">
    <property type="entry name" value="Pept_tRNA_hydro_sf"/>
</dbReference>
<dbReference type="NCBIfam" id="TIGR00447">
    <property type="entry name" value="pth"/>
    <property type="match status" value="1"/>
</dbReference>
<dbReference type="PANTHER" id="PTHR17224">
    <property type="entry name" value="PEPTIDYL-TRNA HYDROLASE"/>
    <property type="match status" value="1"/>
</dbReference>
<dbReference type="PANTHER" id="PTHR17224:SF1">
    <property type="entry name" value="PEPTIDYL-TRNA HYDROLASE"/>
    <property type="match status" value="1"/>
</dbReference>
<dbReference type="Pfam" id="PF01195">
    <property type="entry name" value="Pept_tRNA_hydro"/>
    <property type="match status" value="1"/>
</dbReference>
<dbReference type="SUPFAM" id="SSF53178">
    <property type="entry name" value="Peptidyl-tRNA hydrolase-like"/>
    <property type="match status" value="1"/>
</dbReference>
<dbReference type="PROSITE" id="PS01195">
    <property type="entry name" value="PEPT_TRNA_HYDROL_1"/>
    <property type="match status" value="1"/>
</dbReference>
<dbReference type="PROSITE" id="PS01196">
    <property type="entry name" value="PEPT_TRNA_HYDROL_2"/>
    <property type="match status" value="1"/>
</dbReference>
<reference key="1">
    <citation type="journal article" date="2008" name="PLoS Genet.">
        <title>Complete genome sequence of the N2-fixing broad host range endophyte Klebsiella pneumoniae 342 and virulence predictions verified in mice.</title>
        <authorList>
            <person name="Fouts D.E."/>
            <person name="Tyler H.L."/>
            <person name="DeBoy R.T."/>
            <person name="Daugherty S."/>
            <person name="Ren Q."/>
            <person name="Badger J.H."/>
            <person name="Durkin A.S."/>
            <person name="Huot H."/>
            <person name="Shrivastava S."/>
            <person name="Kothari S."/>
            <person name="Dodson R.J."/>
            <person name="Mohamoud Y."/>
            <person name="Khouri H."/>
            <person name="Roesch L.F.W."/>
            <person name="Krogfelt K.A."/>
            <person name="Struve C."/>
            <person name="Triplett E.W."/>
            <person name="Methe B.A."/>
        </authorList>
    </citation>
    <scope>NUCLEOTIDE SEQUENCE [LARGE SCALE GENOMIC DNA]</scope>
    <source>
        <strain>342</strain>
    </source>
</reference>